<dbReference type="EC" id="2.2.1.2"/>
<dbReference type="EMBL" id="Z72828">
    <property type="protein sequence ID" value="CAA97042.1"/>
    <property type="molecule type" value="Genomic_DNA"/>
</dbReference>
<dbReference type="EMBL" id="AY557832">
    <property type="protein sequence ID" value="AAS56158.1"/>
    <property type="molecule type" value="Genomic_DNA"/>
</dbReference>
<dbReference type="EMBL" id="BK006941">
    <property type="protein sequence ID" value="DAA08142.1"/>
    <property type="molecule type" value="Genomic_DNA"/>
</dbReference>
<dbReference type="PIR" id="S64337">
    <property type="entry name" value="S64337"/>
</dbReference>
<dbReference type="RefSeq" id="NP_011557.1">
    <property type="nucleotide sequence ID" value="NM_001181172.1"/>
</dbReference>
<dbReference type="PDB" id="3CQ0">
    <property type="method" value="X-ray"/>
    <property type="resolution" value="1.90 A"/>
    <property type="chains" value="A/B=1-333"/>
</dbReference>
<dbReference type="PDBsum" id="3CQ0"/>
<dbReference type="SMR" id="P53228"/>
<dbReference type="BioGRID" id="33290">
    <property type="interactions" value="61"/>
</dbReference>
<dbReference type="FunCoup" id="P53228">
    <property type="interactions" value="960"/>
</dbReference>
<dbReference type="IntAct" id="P53228">
    <property type="interactions" value="3"/>
</dbReference>
<dbReference type="MINT" id="P53228"/>
<dbReference type="STRING" id="4932.YGR043C"/>
<dbReference type="iPTMnet" id="P53228"/>
<dbReference type="PaxDb" id="4932-YGR043C"/>
<dbReference type="PeptideAtlas" id="P53228"/>
<dbReference type="EnsemblFungi" id="YGR043C_mRNA">
    <property type="protein sequence ID" value="YGR043C"/>
    <property type="gene ID" value="YGR043C"/>
</dbReference>
<dbReference type="GeneID" id="852934"/>
<dbReference type="KEGG" id="sce:YGR043C"/>
<dbReference type="AGR" id="SGD:S000003275"/>
<dbReference type="SGD" id="S000003275">
    <property type="gene designation" value="NQM1"/>
</dbReference>
<dbReference type="VEuPathDB" id="FungiDB:YGR043C"/>
<dbReference type="eggNOG" id="KOG2772">
    <property type="taxonomic scope" value="Eukaryota"/>
</dbReference>
<dbReference type="GeneTree" id="ENSGT00390000017361"/>
<dbReference type="HOGENOM" id="CLU_047470_0_1_1"/>
<dbReference type="InParanoid" id="P53228"/>
<dbReference type="OMA" id="IVRFGCE"/>
<dbReference type="OrthoDB" id="2015515at2759"/>
<dbReference type="BioCyc" id="YEAST:YGR043C-MONOMER"/>
<dbReference type="BRENDA" id="2.2.1.2">
    <property type="organism ID" value="984"/>
</dbReference>
<dbReference type="UniPathway" id="UPA00115">
    <property type="reaction ID" value="UER00414"/>
</dbReference>
<dbReference type="BioGRID-ORCS" id="852934">
    <property type="hits" value="0 hits in 10 CRISPR screens"/>
</dbReference>
<dbReference type="EvolutionaryTrace" id="P53228"/>
<dbReference type="PRO" id="PR:P53228"/>
<dbReference type="Proteomes" id="UP000002311">
    <property type="component" value="Chromosome VII"/>
</dbReference>
<dbReference type="RNAct" id="P53228">
    <property type="molecule type" value="protein"/>
</dbReference>
<dbReference type="GO" id="GO:0005737">
    <property type="term" value="C:cytoplasm"/>
    <property type="evidence" value="ECO:0007669"/>
    <property type="project" value="InterPro"/>
</dbReference>
<dbReference type="GO" id="GO:0005634">
    <property type="term" value="C:nucleus"/>
    <property type="evidence" value="ECO:0007005"/>
    <property type="project" value="SGD"/>
</dbReference>
<dbReference type="GO" id="GO:0004801">
    <property type="term" value="F:transaldolase activity"/>
    <property type="evidence" value="ECO:0000314"/>
    <property type="project" value="SGD"/>
</dbReference>
<dbReference type="GO" id="GO:0005975">
    <property type="term" value="P:carbohydrate metabolic process"/>
    <property type="evidence" value="ECO:0007669"/>
    <property type="project" value="InterPro"/>
</dbReference>
<dbReference type="GO" id="GO:0034599">
    <property type="term" value="P:cellular response to oxidative stress"/>
    <property type="evidence" value="ECO:0000315"/>
    <property type="project" value="SGD"/>
</dbReference>
<dbReference type="GO" id="GO:0009052">
    <property type="term" value="P:pentose-phosphate shunt, non-oxidative branch"/>
    <property type="evidence" value="ECO:0000318"/>
    <property type="project" value="GO_Central"/>
</dbReference>
<dbReference type="CDD" id="cd00957">
    <property type="entry name" value="Transaldolase_TalAB"/>
    <property type="match status" value="1"/>
</dbReference>
<dbReference type="FunFam" id="3.20.20.70:FF:000131">
    <property type="entry name" value="Transaldolase"/>
    <property type="match status" value="1"/>
</dbReference>
<dbReference type="Gene3D" id="3.20.20.70">
    <property type="entry name" value="Aldolase class I"/>
    <property type="match status" value="1"/>
</dbReference>
<dbReference type="InterPro" id="IPR013785">
    <property type="entry name" value="Aldolase_TIM"/>
</dbReference>
<dbReference type="InterPro" id="IPR001585">
    <property type="entry name" value="TAL/FSA"/>
</dbReference>
<dbReference type="InterPro" id="IPR004730">
    <property type="entry name" value="Transaldolase_1"/>
</dbReference>
<dbReference type="InterPro" id="IPR018225">
    <property type="entry name" value="Transaldolase_AS"/>
</dbReference>
<dbReference type="NCBIfam" id="TIGR00874">
    <property type="entry name" value="talAB"/>
    <property type="match status" value="1"/>
</dbReference>
<dbReference type="PANTHER" id="PTHR10683">
    <property type="entry name" value="TRANSALDOLASE"/>
    <property type="match status" value="1"/>
</dbReference>
<dbReference type="PANTHER" id="PTHR10683:SF18">
    <property type="entry name" value="TRANSALDOLASE"/>
    <property type="match status" value="1"/>
</dbReference>
<dbReference type="Pfam" id="PF00923">
    <property type="entry name" value="TAL_FSA"/>
    <property type="match status" value="1"/>
</dbReference>
<dbReference type="SUPFAM" id="SSF51569">
    <property type="entry name" value="Aldolase"/>
    <property type="match status" value="1"/>
</dbReference>
<dbReference type="PROSITE" id="PS01054">
    <property type="entry name" value="TRANSALDOLASE_1"/>
    <property type="match status" value="1"/>
</dbReference>
<dbReference type="PROSITE" id="PS00958">
    <property type="entry name" value="TRANSALDOLASE_2"/>
    <property type="match status" value="1"/>
</dbReference>
<accession>P53228</accession>
<accession>D6VUI1</accession>
<accession>Q6Q5P8</accession>
<keyword id="KW-0002">3D-structure</keyword>
<keyword id="KW-0570">Pentose shunt</keyword>
<keyword id="KW-1185">Reference proteome</keyword>
<keyword id="KW-0704">Schiff base</keyword>
<keyword id="KW-0808">Transferase</keyword>
<proteinExistence type="evidence at protein level"/>
<gene>
    <name type="primary">NQM1</name>
    <name type="ordered locus">YGR043C</name>
</gene>
<name>TAL2_YEAST</name>
<sequence>MSEPSEKKQKVATSSLEQLKKAGTHVVADSGDFEAISKYEPQDSTTNPSLILAASKLEKYARFIDAAVEYGRKHGKTDHEKIENAMDKILVEFGTQILKVVPGRVSTEVDARLSFDKKATVKKALHIIKLYKDAGVPKERVLIKIASTWEGIQAARELEVKHGIHCNMTLLFSFTQAVACAEANVTLISPFVGRIMDFYKALSGKDYTAETDPGVLSVKKIYSYYKRHGYATEVMAASFRNLDELKALAGIDNMTLPLNLLEQLYESTDPIENKLNSESAKEEGVEKVSFINDEPHFRYVLNEDQMATEKLSDGIRKFSADIEALYKLVEEKM</sequence>
<protein>
    <recommendedName>
        <fullName>Transaldolase NQM1</fullName>
        <ecNumber>2.2.1.2</ecNumber>
    </recommendedName>
    <alternativeName>
        <fullName>Non-quiescent mutant protein 1</fullName>
    </alternativeName>
</protein>
<comment type="function">
    <text>Transaldolase is important for the balance of metabolites in the pentose-phosphate pathway.</text>
</comment>
<comment type="catalytic activity">
    <reaction evidence="1 3">
        <text>D-sedoheptulose 7-phosphate + D-glyceraldehyde 3-phosphate = D-erythrose 4-phosphate + beta-D-fructose 6-phosphate</text>
        <dbReference type="Rhea" id="RHEA:17053"/>
        <dbReference type="ChEBI" id="CHEBI:16897"/>
        <dbReference type="ChEBI" id="CHEBI:57483"/>
        <dbReference type="ChEBI" id="CHEBI:57634"/>
        <dbReference type="ChEBI" id="CHEBI:59776"/>
        <dbReference type="EC" id="2.2.1.2"/>
    </reaction>
</comment>
<comment type="pathway">
    <text>Carbohydrate degradation; pentose phosphate pathway; D-glyceraldehyde 3-phosphate and beta-D-fructose 6-phosphate from D-ribose 5-phosphate and D-xylulose 5-phosphate (non-oxidative stage): step 2/3.</text>
</comment>
<comment type="subunit">
    <text evidence="3">Homodimer.</text>
</comment>
<comment type="miscellaneous">
    <text evidence="2">Present with 1920 molecules/cell in log phase SD medium.</text>
</comment>
<comment type="similarity">
    <text evidence="4">Belongs to the transaldolase family. Type 1 subfamily.</text>
</comment>
<organism>
    <name type="scientific">Saccharomyces cerevisiae (strain ATCC 204508 / S288c)</name>
    <name type="common">Baker's yeast</name>
    <dbReference type="NCBI Taxonomy" id="559292"/>
    <lineage>
        <taxon>Eukaryota</taxon>
        <taxon>Fungi</taxon>
        <taxon>Dikarya</taxon>
        <taxon>Ascomycota</taxon>
        <taxon>Saccharomycotina</taxon>
        <taxon>Saccharomycetes</taxon>
        <taxon>Saccharomycetales</taxon>
        <taxon>Saccharomycetaceae</taxon>
        <taxon>Saccharomyces</taxon>
    </lineage>
</organism>
<evidence type="ECO:0000255" key="1">
    <source>
        <dbReference type="PROSITE-ProRule" id="PRU10019"/>
    </source>
</evidence>
<evidence type="ECO:0000269" key="2">
    <source>
    </source>
</evidence>
<evidence type="ECO:0000269" key="3">
    <source>
    </source>
</evidence>
<evidence type="ECO:0000305" key="4"/>
<evidence type="ECO:0007829" key="5">
    <source>
        <dbReference type="PDB" id="3CQ0"/>
    </source>
</evidence>
<feature type="chain" id="PRO_0000173575" description="Transaldolase NQM1">
    <location>
        <begin position="1"/>
        <end position="333"/>
    </location>
</feature>
<feature type="active site" description="Schiff-base intermediate with substrate" evidence="1">
    <location>
        <position position="144"/>
    </location>
</feature>
<feature type="sequence conflict" description="In Ref. 3; AAS56158." evidence="4" ref="3">
    <original>F</original>
    <variation>S</variation>
    <location>
        <position position="290"/>
    </location>
</feature>
<feature type="helix" evidence="5">
    <location>
        <begin position="15"/>
        <end position="21"/>
    </location>
</feature>
<feature type="strand" evidence="5">
    <location>
        <begin position="25"/>
        <end position="29"/>
    </location>
</feature>
<feature type="helix" evidence="5">
    <location>
        <begin position="33"/>
        <end position="35"/>
    </location>
</feature>
<feature type="helix" evidence="5">
    <location>
        <begin position="37"/>
        <end position="39"/>
    </location>
</feature>
<feature type="strand" evidence="5">
    <location>
        <begin position="42"/>
        <end position="45"/>
    </location>
</feature>
<feature type="helix" evidence="5">
    <location>
        <begin position="48"/>
        <end position="55"/>
    </location>
</feature>
<feature type="helix" evidence="5">
    <location>
        <begin position="58"/>
        <end position="60"/>
    </location>
</feature>
<feature type="helix" evidence="5">
    <location>
        <begin position="61"/>
        <end position="74"/>
    </location>
</feature>
<feature type="helix" evidence="5">
    <location>
        <begin position="78"/>
        <end position="98"/>
    </location>
</feature>
<feature type="strand" evidence="5">
    <location>
        <begin position="105"/>
        <end position="108"/>
    </location>
</feature>
<feature type="helix" evidence="5">
    <location>
        <begin position="111"/>
        <end position="113"/>
    </location>
</feature>
<feature type="helix" evidence="5">
    <location>
        <begin position="117"/>
        <end position="133"/>
    </location>
</feature>
<feature type="helix" evidence="5">
    <location>
        <begin position="138"/>
        <end position="140"/>
    </location>
</feature>
<feature type="strand" evidence="5">
    <location>
        <begin position="141"/>
        <end position="146"/>
    </location>
</feature>
<feature type="helix" evidence="5">
    <location>
        <begin position="149"/>
        <end position="162"/>
    </location>
</feature>
<feature type="strand" evidence="5">
    <location>
        <begin position="166"/>
        <end position="171"/>
    </location>
</feature>
<feature type="helix" evidence="5">
    <location>
        <begin position="174"/>
        <end position="182"/>
    </location>
</feature>
<feature type="strand" evidence="5">
    <location>
        <begin position="186"/>
        <end position="192"/>
    </location>
</feature>
<feature type="helix" evidence="5">
    <location>
        <begin position="193"/>
        <end position="201"/>
    </location>
</feature>
<feature type="turn" evidence="5">
    <location>
        <begin position="209"/>
        <end position="211"/>
    </location>
</feature>
<feature type="helix" evidence="5">
    <location>
        <begin position="213"/>
        <end position="228"/>
    </location>
</feature>
<feature type="strand" evidence="5">
    <location>
        <begin position="233"/>
        <end position="237"/>
    </location>
</feature>
<feature type="helix" evidence="5">
    <location>
        <begin position="242"/>
        <end position="248"/>
    </location>
</feature>
<feature type="strand" evidence="5">
    <location>
        <begin position="251"/>
        <end position="257"/>
    </location>
</feature>
<feature type="helix" evidence="5">
    <location>
        <begin position="258"/>
        <end position="266"/>
    </location>
</feature>
<feature type="helix" evidence="5">
    <location>
        <begin position="277"/>
        <end position="280"/>
    </location>
</feature>
<feature type="helix" evidence="5">
    <location>
        <begin position="281"/>
        <end position="283"/>
    </location>
</feature>
<feature type="helix" evidence="5">
    <location>
        <begin position="294"/>
        <end position="303"/>
    </location>
</feature>
<feature type="helix" evidence="5">
    <location>
        <begin position="305"/>
        <end position="333"/>
    </location>
</feature>
<reference key="1">
    <citation type="journal article" date="1997" name="Nature">
        <title>The nucleotide sequence of Saccharomyces cerevisiae chromosome VII.</title>
        <authorList>
            <person name="Tettelin H."/>
            <person name="Agostoni-Carbone M.L."/>
            <person name="Albermann K."/>
            <person name="Albers M."/>
            <person name="Arroyo J."/>
            <person name="Backes U."/>
            <person name="Barreiros T."/>
            <person name="Bertani I."/>
            <person name="Bjourson A.J."/>
            <person name="Brueckner M."/>
            <person name="Bruschi C.V."/>
            <person name="Carignani G."/>
            <person name="Castagnoli L."/>
            <person name="Cerdan E."/>
            <person name="Clemente M.L."/>
            <person name="Coblenz A."/>
            <person name="Coglievina M."/>
            <person name="Coissac E."/>
            <person name="Defoor E."/>
            <person name="Del Bino S."/>
            <person name="Delius H."/>
            <person name="Delneri D."/>
            <person name="de Wergifosse P."/>
            <person name="Dujon B."/>
            <person name="Durand P."/>
            <person name="Entian K.-D."/>
            <person name="Eraso P."/>
            <person name="Escribano V."/>
            <person name="Fabiani L."/>
            <person name="Fartmann B."/>
            <person name="Feroli F."/>
            <person name="Feuermann M."/>
            <person name="Frontali L."/>
            <person name="Garcia-Gonzalez M."/>
            <person name="Garcia-Saez M.I."/>
            <person name="Goffeau A."/>
            <person name="Guerreiro P."/>
            <person name="Hani J."/>
            <person name="Hansen M."/>
            <person name="Hebling U."/>
            <person name="Hernandez K."/>
            <person name="Heumann K."/>
            <person name="Hilger F."/>
            <person name="Hofmann B."/>
            <person name="Indge K.J."/>
            <person name="James C.M."/>
            <person name="Klima R."/>
            <person name="Koetter P."/>
            <person name="Kramer B."/>
            <person name="Kramer W."/>
            <person name="Lauquin G."/>
            <person name="Leuther H."/>
            <person name="Louis E.J."/>
            <person name="Maillier E."/>
            <person name="Marconi A."/>
            <person name="Martegani E."/>
            <person name="Mazon M.J."/>
            <person name="Mazzoni C."/>
            <person name="McReynolds A.D.K."/>
            <person name="Melchioretto P."/>
            <person name="Mewes H.-W."/>
            <person name="Minenkova O."/>
            <person name="Mueller-Auer S."/>
            <person name="Nawrocki A."/>
            <person name="Netter P."/>
            <person name="Neu R."/>
            <person name="Nombela C."/>
            <person name="Oliver S.G."/>
            <person name="Panzeri L."/>
            <person name="Paoluzi S."/>
            <person name="Plevani P."/>
            <person name="Portetelle D."/>
            <person name="Portillo F."/>
            <person name="Potier S."/>
            <person name="Purnelle B."/>
            <person name="Rieger M."/>
            <person name="Riles L."/>
            <person name="Rinaldi T."/>
            <person name="Robben J."/>
            <person name="Rodrigues-Pousada C."/>
            <person name="Rodriguez-Belmonte E."/>
            <person name="Rodriguez-Torres A.M."/>
            <person name="Rose M."/>
            <person name="Ruzzi M."/>
            <person name="Saliola M."/>
            <person name="Sanchez-Perez M."/>
            <person name="Schaefer B."/>
            <person name="Schaefer M."/>
            <person name="Scharfe M."/>
            <person name="Schmidheini T."/>
            <person name="Schreer A."/>
            <person name="Skala J."/>
            <person name="Souciet J.-L."/>
            <person name="Steensma H.Y."/>
            <person name="Talla E."/>
            <person name="Thierry A."/>
            <person name="Vandenbol M."/>
            <person name="van der Aart Q.J.M."/>
            <person name="Van Dyck L."/>
            <person name="Vanoni M."/>
            <person name="Verhasselt P."/>
            <person name="Voet M."/>
            <person name="Volckaert G."/>
            <person name="Wambutt R."/>
            <person name="Watson M.D."/>
            <person name="Weber N."/>
            <person name="Wedler E."/>
            <person name="Wedler H."/>
            <person name="Wipfli P."/>
            <person name="Wolf K."/>
            <person name="Wright L.F."/>
            <person name="Zaccaria P."/>
            <person name="Zimmermann M."/>
            <person name="Zollner A."/>
            <person name="Kleine K."/>
        </authorList>
    </citation>
    <scope>NUCLEOTIDE SEQUENCE [LARGE SCALE GENOMIC DNA]</scope>
    <source>
        <strain>ATCC 204508 / S288c</strain>
    </source>
</reference>
<reference key="2">
    <citation type="journal article" date="2014" name="G3 (Bethesda)">
        <title>The reference genome sequence of Saccharomyces cerevisiae: Then and now.</title>
        <authorList>
            <person name="Engel S.R."/>
            <person name="Dietrich F.S."/>
            <person name="Fisk D.G."/>
            <person name="Binkley G."/>
            <person name="Balakrishnan R."/>
            <person name="Costanzo M.C."/>
            <person name="Dwight S.S."/>
            <person name="Hitz B.C."/>
            <person name="Karra K."/>
            <person name="Nash R.S."/>
            <person name="Weng S."/>
            <person name="Wong E.D."/>
            <person name="Lloyd P."/>
            <person name="Skrzypek M.S."/>
            <person name="Miyasato S.R."/>
            <person name="Simison M."/>
            <person name="Cherry J.M."/>
        </authorList>
    </citation>
    <scope>GENOME REANNOTATION</scope>
    <source>
        <strain>ATCC 204508 / S288c</strain>
    </source>
</reference>
<reference key="3">
    <citation type="journal article" date="2007" name="Genome Res.">
        <title>Approaching a complete repository of sequence-verified protein-encoding clones for Saccharomyces cerevisiae.</title>
        <authorList>
            <person name="Hu Y."/>
            <person name="Rolfs A."/>
            <person name="Bhullar B."/>
            <person name="Murthy T.V.S."/>
            <person name="Zhu C."/>
            <person name="Berger M.F."/>
            <person name="Camargo A.A."/>
            <person name="Kelley F."/>
            <person name="McCarron S."/>
            <person name="Jepson D."/>
            <person name="Richardson A."/>
            <person name="Raphael J."/>
            <person name="Moreira D."/>
            <person name="Taycher E."/>
            <person name="Zuo D."/>
            <person name="Mohr S."/>
            <person name="Kane M.F."/>
            <person name="Williamson J."/>
            <person name="Simpson A.J.G."/>
            <person name="Bulyk M.L."/>
            <person name="Harlow E."/>
            <person name="Marsischky G."/>
            <person name="Kolodner R.D."/>
            <person name="LaBaer J."/>
        </authorList>
    </citation>
    <scope>NUCLEOTIDE SEQUENCE [GENOMIC DNA]</scope>
    <source>
        <strain>ATCC 204508 / S288c</strain>
    </source>
</reference>
<reference key="4">
    <citation type="journal article" date="1997" name="Yeast">
        <title>Sequence analysis of 203 kilobases from Saccharomyces cerevisiae chromosome VII.</title>
        <authorList>
            <person name="Rieger M."/>
            <person name="Brueckner M."/>
            <person name="Schaefer M."/>
            <person name="Mueller-Auer S."/>
        </authorList>
    </citation>
    <scope>NUCLEOTIDE SEQUENCE [GENOMIC DNA] OF 1-78</scope>
    <source>
        <strain>ATCC 204508 / S288c</strain>
    </source>
</reference>
<reference key="5">
    <citation type="journal article" date="2003" name="Nature">
        <title>Global analysis of protein expression in yeast.</title>
        <authorList>
            <person name="Ghaemmaghami S."/>
            <person name="Huh W.-K."/>
            <person name="Bower K."/>
            <person name="Howson R.W."/>
            <person name="Belle A."/>
            <person name="Dephoure N."/>
            <person name="O'Shea E.K."/>
            <person name="Weissman J.S."/>
        </authorList>
    </citation>
    <scope>LEVEL OF PROTEIN EXPRESSION [LARGE SCALE ANALYSIS]</scope>
</reference>
<reference key="6">
    <citation type="journal article" date="2008" name="Proteins">
        <title>The crystal structure and identification of NQM1/YGR043C, a transaldolase from Saccharomyces cerevisiae.</title>
        <authorList>
            <person name="Huang H."/>
            <person name="Rong H."/>
            <person name="Li X."/>
            <person name="Tong S."/>
            <person name="Zhu Z."/>
            <person name="Niu L."/>
            <person name="Teng M."/>
        </authorList>
    </citation>
    <scope>X-RAY CRYSTALLOGRAPHY (1.9 ANGSTROMS)</scope>
    <scope>SUBUNIT</scope>
    <scope>CATALYTIC ACTIVITY</scope>
</reference>